<proteinExistence type="inferred from homology"/>
<gene>
    <name evidence="2" type="primary">infB</name>
    <name type="ordered locus">CFPG_053</name>
</gene>
<sequence length="912" mass="103020">MAIRLNKVTKLLNVGLSTIVKFLQSRGYLREENPNTKISPEEYEILNQEFHKDKHVKLDSEKLSKERFQKENYDKDKLKQIEEIKMGIPRSNEFQLLLTSKLDLDTLPQDKSQTTIEIKKTIKTSEIKEIKRENKTDILKERKQIEEIKNSYLNKQQKKSNLLSSTDSTINFTITGKIDLTTINNATRPKRKTKEEKQKEREERNKKIVNIKTEKTTQVNAGKKSIASTQTNIEILKRKKRNRIKHEKVNIEQQNISTIPNPKNKHFKFHKPTYKNEVSEEDVQKQIKETLAKLTNSSLKKGTKYRKEKRDTLLQLKNEQYKIKTQENKTIKITEFVTANDLSKMMNVPVVQVISTCMSIGIMVSINQRLDSETIDIVADEFGYKTEYVSAEAIETIIDDENENQEKELVLRPPIVTIMGHVDHGKTSLLDNIRNTNVIAGEAGGITQHIGAYNVKLDDGRKITFLDTPGHEAFTAMRARGAKITDIAIIIIASDDNIMPQTIEAINHAVAAGVPIIFAINKIDKHGANPEKIKETLASMNYLVEDWGGKYQSQDISAKKGIGIQELLEKVLLEAELLDLKANPKRYAIGSIIESSLDKGRGYIATMLIQNGTLKLGDIVLAGIYFGRVKAMFNERNLKIKEAGPSQAVLVLGLNGAPQAGDTIRVVKTEQEAREIAAKREQLQREQSLRTQKLLTLDDISRRIAVKNFHKLNIIVKGDVDGSVEALSDSLIRLSTEQIQINVIHKGVGQISESDVILATASNAFIIGFQVRPSLLTRKLAEKEGVEIRLYSIIYNAIEEVKSAMEGMLIPKTKEEITSNVEIREVYKITKVGSVAGCIVKEGKIKQGDKIRLIRNGVVIYTGELGSLKRYKDYAKEVTQGCECGLNIHNFNDIKVGDIIETFENIETKQKL</sequence>
<feature type="chain" id="PRO_1000117320" description="Translation initiation factor IF-2">
    <location>
        <begin position="1"/>
        <end position="912"/>
    </location>
</feature>
<feature type="domain" description="tr-type G">
    <location>
        <begin position="411"/>
        <end position="581"/>
    </location>
</feature>
<feature type="region of interest" description="Disordered" evidence="3">
    <location>
        <begin position="185"/>
        <end position="204"/>
    </location>
</feature>
<feature type="region of interest" description="G1" evidence="1">
    <location>
        <begin position="420"/>
        <end position="427"/>
    </location>
</feature>
<feature type="region of interest" description="G2" evidence="1">
    <location>
        <begin position="445"/>
        <end position="449"/>
    </location>
</feature>
<feature type="region of interest" description="G3" evidence="1">
    <location>
        <begin position="467"/>
        <end position="470"/>
    </location>
</feature>
<feature type="region of interest" description="G4" evidence="1">
    <location>
        <begin position="521"/>
        <end position="524"/>
    </location>
</feature>
<feature type="region of interest" description="G5" evidence="1">
    <location>
        <begin position="557"/>
        <end position="559"/>
    </location>
</feature>
<feature type="compositionally biased region" description="Basic and acidic residues" evidence="3">
    <location>
        <begin position="193"/>
        <end position="204"/>
    </location>
</feature>
<feature type="binding site" evidence="2">
    <location>
        <begin position="420"/>
        <end position="427"/>
    </location>
    <ligand>
        <name>GTP</name>
        <dbReference type="ChEBI" id="CHEBI:37565"/>
    </ligand>
</feature>
<feature type="binding site" evidence="2">
    <location>
        <begin position="467"/>
        <end position="471"/>
    </location>
    <ligand>
        <name>GTP</name>
        <dbReference type="ChEBI" id="CHEBI:37565"/>
    </ligand>
</feature>
<feature type="binding site" evidence="2">
    <location>
        <begin position="521"/>
        <end position="524"/>
    </location>
    <ligand>
        <name>GTP</name>
        <dbReference type="ChEBI" id="CHEBI:37565"/>
    </ligand>
</feature>
<keyword id="KW-0963">Cytoplasm</keyword>
<keyword id="KW-0342">GTP-binding</keyword>
<keyword id="KW-0396">Initiation factor</keyword>
<keyword id="KW-0547">Nucleotide-binding</keyword>
<keyword id="KW-0648">Protein biosynthesis</keyword>
<keyword id="KW-1185">Reference proteome</keyword>
<comment type="function">
    <text evidence="2">One of the essential components for the initiation of protein synthesis. Protects formylmethionyl-tRNA from spontaneous hydrolysis and promotes its binding to the 30S ribosomal subunits. Also involved in the hydrolysis of GTP during the formation of the 70S ribosomal complex.</text>
</comment>
<comment type="subcellular location">
    <subcellularLocation>
        <location evidence="2">Cytoplasm</location>
    </subcellularLocation>
</comment>
<comment type="similarity">
    <text evidence="2">Belongs to the TRAFAC class translation factor GTPase superfamily. Classic translation factor GTPase family. IF-2 subfamily.</text>
</comment>
<protein>
    <recommendedName>
        <fullName evidence="2">Translation initiation factor IF-2</fullName>
    </recommendedName>
</protein>
<accession>B6YQ44</accession>
<reference key="1">
    <citation type="journal article" date="2008" name="Science">
        <title>Genome of an endosymbiont coupling N2 fixation to cellulolysis within RT protist cells in termite gut.</title>
        <authorList>
            <person name="Hongoh Y."/>
            <person name="Sharma V.K."/>
            <person name="Prakash T."/>
            <person name="Noda S."/>
            <person name="Toh H."/>
            <person name="Taylor T.D."/>
            <person name="Kudo T."/>
            <person name="Sakaki Y."/>
            <person name="Toyoda A."/>
            <person name="Hattori M."/>
            <person name="Ohkuma M."/>
        </authorList>
    </citation>
    <scope>NUCLEOTIDE SEQUENCE [LARGE SCALE GENOMIC DNA]</scope>
</reference>
<organism>
    <name type="scientific">Azobacteroides pseudotrichonymphae genomovar. CFP2</name>
    <dbReference type="NCBI Taxonomy" id="511995"/>
    <lineage>
        <taxon>Bacteria</taxon>
        <taxon>Pseudomonadati</taxon>
        <taxon>Bacteroidota</taxon>
        <taxon>Bacteroidia</taxon>
        <taxon>Bacteroidales</taxon>
        <taxon>Candidatus Azobacteroides</taxon>
    </lineage>
</organism>
<dbReference type="EMBL" id="AP010656">
    <property type="protein sequence ID" value="BAG83316.1"/>
    <property type="molecule type" value="Genomic_DNA"/>
</dbReference>
<dbReference type="RefSeq" id="WP_012573077.1">
    <property type="nucleotide sequence ID" value="NC_011565.1"/>
</dbReference>
<dbReference type="SMR" id="B6YQ44"/>
<dbReference type="STRING" id="511995.CFPG_053"/>
<dbReference type="KEGG" id="aps:CFPG_053"/>
<dbReference type="eggNOG" id="COG0532">
    <property type="taxonomic scope" value="Bacteria"/>
</dbReference>
<dbReference type="HOGENOM" id="CLU_006301_0_0_10"/>
<dbReference type="OrthoDB" id="9811804at2"/>
<dbReference type="Proteomes" id="UP000000723">
    <property type="component" value="Chromosome"/>
</dbReference>
<dbReference type="GO" id="GO:0005737">
    <property type="term" value="C:cytoplasm"/>
    <property type="evidence" value="ECO:0007669"/>
    <property type="project" value="UniProtKB-SubCell"/>
</dbReference>
<dbReference type="GO" id="GO:0005525">
    <property type="term" value="F:GTP binding"/>
    <property type="evidence" value="ECO:0007669"/>
    <property type="project" value="UniProtKB-KW"/>
</dbReference>
<dbReference type="GO" id="GO:0003924">
    <property type="term" value="F:GTPase activity"/>
    <property type="evidence" value="ECO:0007669"/>
    <property type="project" value="UniProtKB-UniRule"/>
</dbReference>
<dbReference type="GO" id="GO:0003743">
    <property type="term" value="F:translation initiation factor activity"/>
    <property type="evidence" value="ECO:0007669"/>
    <property type="project" value="UniProtKB-UniRule"/>
</dbReference>
<dbReference type="CDD" id="cd01887">
    <property type="entry name" value="IF2_eIF5B"/>
    <property type="match status" value="1"/>
</dbReference>
<dbReference type="CDD" id="cd03702">
    <property type="entry name" value="IF2_mtIF2_II"/>
    <property type="match status" value="1"/>
</dbReference>
<dbReference type="CDD" id="cd03692">
    <property type="entry name" value="mtIF2_IVc"/>
    <property type="match status" value="1"/>
</dbReference>
<dbReference type="FunFam" id="2.40.30.10:FF:000007">
    <property type="entry name" value="Translation initiation factor IF-2"/>
    <property type="match status" value="1"/>
</dbReference>
<dbReference type="FunFam" id="2.40.30.10:FF:000008">
    <property type="entry name" value="Translation initiation factor IF-2"/>
    <property type="match status" value="1"/>
</dbReference>
<dbReference type="FunFam" id="3.40.50.10050:FF:000001">
    <property type="entry name" value="Translation initiation factor IF-2"/>
    <property type="match status" value="1"/>
</dbReference>
<dbReference type="FunFam" id="3.40.50.300:FF:000019">
    <property type="entry name" value="Translation initiation factor IF-2"/>
    <property type="match status" value="1"/>
</dbReference>
<dbReference type="Gene3D" id="3.40.50.300">
    <property type="entry name" value="P-loop containing nucleotide triphosphate hydrolases"/>
    <property type="match status" value="1"/>
</dbReference>
<dbReference type="Gene3D" id="2.40.30.10">
    <property type="entry name" value="Translation factors"/>
    <property type="match status" value="2"/>
</dbReference>
<dbReference type="Gene3D" id="3.40.50.10050">
    <property type="entry name" value="Translation initiation factor IF- 2, domain 3"/>
    <property type="match status" value="1"/>
</dbReference>
<dbReference type="HAMAP" id="MF_00100_B">
    <property type="entry name" value="IF_2_B"/>
    <property type="match status" value="1"/>
</dbReference>
<dbReference type="InterPro" id="IPR053905">
    <property type="entry name" value="EF-G-like_DII"/>
</dbReference>
<dbReference type="InterPro" id="IPR004161">
    <property type="entry name" value="EFTu-like_2"/>
</dbReference>
<dbReference type="InterPro" id="IPR044145">
    <property type="entry name" value="IF2_II"/>
</dbReference>
<dbReference type="InterPro" id="IPR006847">
    <property type="entry name" value="IF2_N"/>
</dbReference>
<dbReference type="InterPro" id="IPR027417">
    <property type="entry name" value="P-loop_NTPase"/>
</dbReference>
<dbReference type="InterPro" id="IPR005225">
    <property type="entry name" value="Small_GTP-bd"/>
</dbReference>
<dbReference type="InterPro" id="IPR000795">
    <property type="entry name" value="T_Tr_GTP-bd_dom"/>
</dbReference>
<dbReference type="InterPro" id="IPR000178">
    <property type="entry name" value="TF_IF2_bacterial-like"/>
</dbReference>
<dbReference type="InterPro" id="IPR015760">
    <property type="entry name" value="TIF_IF2"/>
</dbReference>
<dbReference type="InterPro" id="IPR023115">
    <property type="entry name" value="TIF_IF2_dom3"/>
</dbReference>
<dbReference type="InterPro" id="IPR036925">
    <property type="entry name" value="TIF_IF2_dom3_sf"/>
</dbReference>
<dbReference type="InterPro" id="IPR009000">
    <property type="entry name" value="Transl_B-barrel_sf"/>
</dbReference>
<dbReference type="NCBIfam" id="TIGR00487">
    <property type="entry name" value="IF-2"/>
    <property type="match status" value="1"/>
</dbReference>
<dbReference type="NCBIfam" id="TIGR00231">
    <property type="entry name" value="small_GTP"/>
    <property type="match status" value="1"/>
</dbReference>
<dbReference type="PANTHER" id="PTHR43381:SF5">
    <property type="entry name" value="TR-TYPE G DOMAIN-CONTAINING PROTEIN"/>
    <property type="match status" value="1"/>
</dbReference>
<dbReference type="PANTHER" id="PTHR43381">
    <property type="entry name" value="TRANSLATION INITIATION FACTOR IF-2-RELATED"/>
    <property type="match status" value="1"/>
</dbReference>
<dbReference type="Pfam" id="PF22042">
    <property type="entry name" value="EF-G_D2"/>
    <property type="match status" value="1"/>
</dbReference>
<dbReference type="Pfam" id="PF00009">
    <property type="entry name" value="GTP_EFTU"/>
    <property type="match status" value="1"/>
</dbReference>
<dbReference type="Pfam" id="PF03144">
    <property type="entry name" value="GTP_EFTU_D2"/>
    <property type="match status" value="1"/>
</dbReference>
<dbReference type="Pfam" id="PF11987">
    <property type="entry name" value="IF-2"/>
    <property type="match status" value="1"/>
</dbReference>
<dbReference type="Pfam" id="PF04760">
    <property type="entry name" value="IF2_N"/>
    <property type="match status" value="1"/>
</dbReference>
<dbReference type="SUPFAM" id="SSF52156">
    <property type="entry name" value="Initiation factor IF2/eIF5b, domain 3"/>
    <property type="match status" value="1"/>
</dbReference>
<dbReference type="SUPFAM" id="SSF52540">
    <property type="entry name" value="P-loop containing nucleoside triphosphate hydrolases"/>
    <property type="match status" value="1"/>
</dbReference>
<dbReference type="SUPFAM" id="SSF50447">
    <property type="entry name" value="Translation proteins"/>
    <property type="match status" value="2"/>
</dbReference>
<dbReference type="PROSITE" id="PS51722">
    <property type="entry name" value="G_TR_2"/>
    <property type="match status" value="1"/>
</dbReference>
<dbReference type="PROSITE" id="PS01176">
    <property type="entry name" value="IF2"/>
    <property type="match status" value="1"/>
</dbReference>
<evidence type="ECO:0000250" key="1"/>
<evidence type="ECO:0000255" key="2">
    <source>
        <dbReference type="HAMAP-Rule" id="MF_00100"/>
    </source>
</evidence>
<evidence type="ECO:0000256" key="3">
    <source>
        <dbReference type="SAM" id="MobiDB-lite"/>
    </source>
</evidence>
<name>IF2_AZOPC</name>